<comment type="function">
    <text evidence="1">May be involved in the proteolytic processing of a quorum sensing system signal molecule precursor.</text>
</comment>
<comment type="subcellular location">
    <subcellularLocation>
        <location evidence="1">Cell membrane</location>
        <topology evidence="1">Multi-pass membrane protein</topology>
    </subcellularLocation>
</comment>
<comment type="similarity">
    <text evidence="1">Belongs to the AgrB family.</text>
</comment>
<evidence type="ECO:0000255" key="1">
    <source>
        <dbReference type="HAMAP-Rule" id="MF_00784"/>
    </source>
</evidence>
<sequence length="187" mass="21675">MRKFLKSAIEYLAKDLDLDKELLEQIQYVVIVLTFEFIKCISVILIAGILGYFKESLIVILSMCFIKPFIGGYHEDSQLKCFIATLIITTSIIMLVTFNKLNLFSIVILNLFSIFSIYNKAPVIDSRFPLTKEHLIKKNKILSVTNSSILFLITLIFFKISWISQTITWTLLIQTLLLFNKYKREDS</sequence>
<gene>
    <name type="ordered locus">CPE0871</name>
</gene>
<reference key="1">
    <citation type="journal article" date="2002" name="Proc. Natl. Acad. Sci. U.S.A.">
        <title>Complete genome sequence of Clostridium perfringens, an anaerobic flesh-eater.</title>
        <authorList>
            <person name="Shimizu T."/>
            <person name="Ohtani K."/>
            <person name="Hirakawa H."/>
            <person name="Ohshima K."/>
            <person name="Yamashita A."/>
            <person name="Shiba T."/>
            <person name="Ogasawara N."/>
            <person name="Hattori M."/>
            <person name="Kuhara S."/>
            <person name="Hayashi H."/>
        </authorList>
    </citation>
    <scope>NUCLEOTIDE SEQUENCE [LARGE SCALE GENOMIC DNA]</scope>
    <source>
        <strain>13 / Type A</strain>
    </source>
</reference>
<name>AGRB1_CLOPE</name>
<keyword id="KW-1003">Cell membrane</keyword>
<keyword id="KW-0378">Hydrolase</keyword>
<keyword id="KW-0472">Membrane</keyword>
<keyword id="KW-0645">Protease</keyword>
<keyword id="KW-0673">Quorum sensing</keyword>
<keyword id="KW-1185">Reference proteome</keyword>
<keyword id="KW-0812">Transmembrane</keyword>
<keyword id="KW-1133">Transmembrane helix</keyword>
<protein>
    <recommendedName>
        <fullName evidence="1">Putative AgrB-like protein 1</fullName>
        <ecNumber evidence="1">3.4.-.-</ecNumber>
    </recommendedName>
</protein>
<proteinExistence type="inferred from homology"/>
<accession>Q8XM19</accession>
<dbReference type="EC" id="3.4.-.-" evidence="1"/>
<dbReference type="EMBL" id="BA000016">
    <property type="protein sequence ID" value="BAB80577.1"/>
    <property type="molecule type" value="Genomic_DNA"/>
</dbReference>
<dbReference type="RefSeq" id="WP_003455702.1">
    <property type="nucleotide sequence ID" value="NC_003366.1"/>
</dbReference>
<dbReference type="STRING" id="195102.gene:10490134"/>
<dbReference type="KEGG" id="cpe:CPE0871"/>
<dbReference type="HOGENOM" id="CLU_098969_2_1_9"/>
<dbReference type="Proteomes" id="UP000000818">
    <property type="component" value="Chromosome"/>
</dbReference>
<dbReference type="GO" id="GO:0005886">
    <property type="term" value="C:plasma membrane"/>
    <property type="evidence" value="ECO:0007669"/>
    <property type="project" value="UniProtKB-SubCell"/>
</dbReference>
<dbReference type="GO" id="GO:0008233">
    <property type="term" value="F:peptidase activity"/>
    <property type="evidence" value="ECO:0007669"/>
    <property type="project" value="UniProtKB-UniRule"/>
</dbReference>
<dbReference type="GO" id="GO:0006508">
    <property type="term" value="P:proteolysis"/>
    <property type="evidence" value="ECO:0007669"/>
    <property type="project" value="UniProtKB-KW"/>
</dbReference>
<dbReference type="GO" id="GO:0009372">
    <property type="term" value="P:quorum sensing"/>
    <property type="evidence" value="ECO:0007669"/>
    <property type="project" value="UniProtKB-UniRule"/>
</dbReference>
<dbReference type="HAMAP" id="MF_00784">
    <property type="entry name" value="AgrB"/>
    <property type="match status" value="1"/>
</dbReference>
<dbReference type="InterPro" id="IPR006741">
    <property type="entry name" value="AgrB"/>
</dbReference>
<dbReference type="Pfam" id="PF04647">
    <property type="entry name" value="AgrB"/>
    <property type="match status" value="1"/>
</dbReference>
<dbReference type="SMART" id="SM00793">
    <property type="entry name" value="AgrB"/>
    <property type="match status" value="1"/>
</dbReference>
<feature type="chain" id="PRO_0000168137" description="Putative AgrB-like protein 1">
    <location>
        <begin position="1"/>
        <end position="187"/>
    </location>
</feature>
<feature type="transmembrane region" description="Helical" evidence="1">
    <location>
        <begin position="29"/>
        <end position="49"/>
    </location>
</feature>
<feature type="transmembrane region" description="Helical" evidence="1">
    <location>
        <begin position="50"/>
        <end position="70"/>
    </location>
</feature>
<feature type="transmembrane region" description="Helical" evidence="1">
    <location>
        <begin position="81"/>
        <end position="98"/>
    </location>
</feature>
<feature type="transmembrane region" description="Helical" evidence="1">
    <location>
        <begin position="103"/>
        <end position="120"/>
    </location>
</feature>
<feature type="transmembrane region" description="Helical" evidence="1">
    <location>
        <begin position="149"/>
        <end position="169"/>
    </location>
</feature>
<organism>
    <name type="scientific">Clostridium perfringens (strain 13 / Type A)</name>
    <dbReference type="NCBI Taxonomy" id="195102"/>
    <lineage>
        <taxon>Bacteria</taxon>
        <taxon>Bacillati</taxon>
        <taxon>Bacillota</taxon>
        <taxon>Clostridia</taxon>
        <taxon>Eubacteriales</taxon>
        <taxon>Clostridiaceae</taxon>
        <taxon>Clostridium</taxon>
    </lineage>
</organism>